<reference key="1">
    <citation type="journal article" date="2005" name="Genome Res.">
        <title>Living with two extremes: conclusions from the genome sequence of Natronomonas pharaonis.</title>
        <authorList>
            <person name="Falb M."/>
            <person name="Pfeiffer F."/>
            <person name="Palm P."/>
            <person name="Rodewald K."/>
            <person name="Hickmann V."/>
            <person name="Tittor J."/>
            <person name="Oesterhelt D."/>
        </authorList>
    </citation>
    <scope>NUCLEOTIDE SEQUENCE [LARGE SCALE GENOMIC DNA]</scope>
    <source>
        <strain>ATCC 35678 / DSM 2160 / CIP 103997 / JCM 8858 / NBRC 14720 / NCIMB 2260 / Gabara</strain>
    </source>
</reference>
<keyword id="KW-0653">Protein transport</keyword>
<keyword id="KW-1185">Reference proteome</keyword>
<keyword id="KW-0694">RNA-binding</keyword>
<keyword id="KW-0813">Transport</keyword>
<feature type="chain" id="PRO_1000083770" description="Nascent polypeptide-associated complex protein">
    <location>
        <begin position="1"/>
        <end position="124"/>
    </location>
</feature>
<feature type="domain" description="NAC-A/B" evidence="1">
    <location>
        <begin position="7"/>
        <end position="74"/>
    </location>
</feature>
<feature type="region of interest" description="Disordered" evidence="2">
    <location>
        <begin position="53"/>
        <end position="124"/>
    </location>
</feature>
<feature type="compositionally biased region" description="Acidic residues" evidence="2">
    <location>
        <begin position="74"/>
        <end position="93"/>
    </location>
</feature>
<proteinExistence type="inferred from homology"/>
<name>NAC_NATPD</name>
<protein>
    <recommendedName>
        <fullName evidence="1">Nascent polypeptide-associated complex protein</fullName>
    </recommendedName>
</protein>
<organism>
    <name type="scientific">Natronomonas pharaonis (strain ATCC 35678 / DSM 2160 / CIP 103997 / JCM 8858 / NBRC 14720 / NCIMB 2260 / Gabara)</name>
    <name type="common">Halobacterium pharaonis</name>
    <dbReference type="NCBI Taxonomy" id="348780"/>
    <lineage>
        <taxon>Archaea</taxon>
        <taxon>Methanobacteriati</taxon>
        <taxon>Methanobacteriota</taxon>
        <taxon>Stenosarchaea group</taxon>
        <taxon>Halobacteria</taxon>
        <taxon>Halobacteriales</taxon>
        <taxon>Haloarculaceae</taxon>
        <taxon>Natronomonas</taxon>
    </lineage>
</organism>
<accession>Q3IUB3</accession>
<evidence type="ECO:0000255" key="1">
    <source>
        <dbReference type="HAMAP-Rule" id="MF_00814"/>
    </source>
</evidence>
<evidence type="ECO:0000256" key="2">
    <source>
        <dbReference type="SAM" id="MobiDB-lite"/>
    </source>
</evidence>
<sequence>MFGGGGGLNPRKMKQMMNQMGIDLEEIDAEEVVIRTADEELVFDDAEVQLMDAQGQQTYQVVGEPESRERGDSGSEDDSETESGGEFSEDDVEIVAQRAGVSESTARETLEETGDLAAAVQKLE</sequence>
<gene>
    <name evidence="1" type="primary">nac</name>
    <name type="ordered locus">NP_0354A</name>
</gene>
<comment type="function">
    <text evidence="1">Contacts the emerging nascent chain on the ribosome.</text>
</comment>
<comment type="subunit">
    <text evidence="1">Homodimer. Interacts with the ribosome. Binds ribosomal RNA.</text>
</comment>
<comment type="similarity">
    <text evidence="1">Belongs to the NAC-alpha family.</text>
</comment>
<dbReference type="EMBL" id="CR936257">
    <property type="protein sequence ID" value="CAI48268.1"/>
    <property type="molecule type" value="Genomic_DNA"/>
</dbReference>
<dbReference type="RefSeq" id="WP_011321906.1">
    <property type="nucleotide sequence ID" value="NC_007426.1"/>
</dbReference>
<dbReference type="SMR" id="Q3IUB3"/>
<dbReference type="STRING" id="348780.NP_0354A"/>
<dbReference type="EnsemblBacteria" id="CAI48268">
    <property type="protein sequence ID" value="CAI48268"/>
    <property type="gene ID" value="NP_0354A"/>
</dbReference>
<dbReference type="GeneID" id="3700828"/>
<dbReference type="KEGG" id="nph:NP_0354A"/>
<dbReference type="eggNOG" id="arCOG04061">
    <property type="taxonomic scope" value="Archaea"/>
</dbReference>
<dbReference type="HOGENOM" id="CLU_146475_1_0_2"/>
<dbReference type="OrthoDB" id="53273at2157"/>
<dbReference type="Proteomes" id="UP000002698">
    <property type="component" value="Chromosome"/>
</dbReference>
<dbReference type="GO" id="GO:0003723">
    <property type="term" value="F:RNA binding"/>
    <property type="evidence" value="ECO:0007669"/>
    <property type="project" value="UniProtKB-UniRule"/>
</dbReference>
<dbReference type="GO" id="GO:0015031">
    <property type="term" value="P:protein transport"/>
    <property type="evidence" value="ECO:0007669"/>
    <property type="project" value="UniProtKB-UniRule"/>
</dbReference>
<dbReference type="Gene3D" id="1.10.8.10">
    <property type="entry name" value="DNA helicase RuvA subunit, C-terminal domain"/>
    <property type="match status" value="1"/>
</dbReference>
<dbReference type="Gene3D" id="2.20.70.30">
    <property type="entry name" value="Nascent polypeptide-associated complex domain"/>
    <property type="match status" value="1"/>
</dbReference>
<dbReference type="HAMAP" id="MF_00814">
    <property type="entry name" value="NAC_arch"/>
    <property type="match status" value="1"/>
</dbReference>
<dbReference type="InterPro" id="IPR038187">
    <property type="entry name" value="NAC_A/B_dom_sf"/>
</dbReference>
<dbReference type="InterPro" id="IPR005231">
    <property type="entry name" value="NAC_arc"/>
</dbReference>
<dbReference type="InterPro" id="IPR002715">
    <property type="entry name" value="Nas_poly-pep-assoc_cplx_dom"/>
</dbReference>
<dbReference type="NCBIfam" id="TIGR00264">
    <property type="entry name" value="archaeal-type nascent polypeptide-associated complex protein"/>
    <property type="match status" value="1"/>
</dbReference>
<dbReference type="Pfam" id="PF01849">
    <property type="entry name" value="NAC"/>
    <property type="match status" value="1"/>
</dbReference>
<dbReference type="SMART" id="SM01407">
    <property type="entry name" value="NAC"/>
    <property type="match status" value="1"/>
</dbReference>
<dbReference type="PROSITE" id="PS51151">
    <property type="entry name" value="NAC_AB"/>
    <property type="match status" value="1"/>
</dbReference>